<protein>
    <recommendedName>
        <fullName evidence="1">S-adenosylmethionine synthase</fullName>
        <shortName evidence="1">AdoMet synthase</shortName>
        <ecNumber evidence="1">2.5.1.6</ecNumber>
    </recommendedName>
    <alternativeName>
        <fullName evidence="1">Methionine adenosyltransferase</fullName>
    </alternativeName>
</protein>
<comment type="function">
    <text evidence="1">Catalyzes the formation of S-adenosylmethionine from methionine and ATP.</text>
</comment>
<comment type="catalytic activity">
    <reaction evidence="1">
        <text>L-methionine + ATP + H2O = S-adenosyl-L-methionine + phosphate + diphosphate</text>
        <dbReference type="Rhea" id="RHEA:21080"/>
        <dbReference type="ChEBI" id="CHEBI:15377"/>
        <dbReference type="ChEBI" id="CHEBI:30616"/>
        <dbReference type="ChEBI" id="CHEBI:33019"/>
        <dbReference type="ChEBI" id="CHEBI:43474"/>
        <dbReference type="ChEBI" id="CHEBI:57844"/>
        <dbReference type="ChEBI" id="CHEBI:59789"/>
        <dbReference type="EC" id="2.5.1.6"/>
    </reaction>
</comment>
<comment type="cofactor">
    <cofactor evidence="1">
        <name>Mg(2+)</name>
        <dbReference type="ChEBI" id="CHEBI:18420"/>
    </cofactor>
</comment>
<comment type="pathway">
    <text evidence="1">Amino-acid biosynthesis; S-adenosyl-L-methionine biosynthesis; S-adenosyl-L-methionine from L-methionine: step 1/1.</text>
</comment>
<comment type="similarity">
    <text evidence="1">Belongs to the AdoMet synthase 2 family.</text>
</comment>
<sequence>MRNINVQLNPLSDIEKLQVELVERKGLGHPDYIADAVAEEASRKLSLYYLKKYGVILHHNLDKTLVVGGQATPRFKGGDVIQPIYIVVAGRATTEVKTESGIEQIPVGTIIIESVKEWIRNNFRYLDAEKHLIVDYKIGKGSTDLVGIFEAGKRVPLSNDTSFGVGFAPFTKLEKLVYETERHLNSKQFKAKLPEVGEDIKVMGLRRGNEVDLTIAMATISELIEDVNHYINVKEQAKNKILDLASKIAPDYDVRIYVNTGDKIDKNILYLTVTGTSAEHGDDGMTGRGNRGVGLITPMRPMSLEATAGKNPVNHVGKLYNVLANLIANKIAQEVKDVKFSQVQVLGQIGRPIDDPLIANVDVITYDGKLNDETKNEISGIVDEMLSSFNKLTELILEGKATLF</sequence>
<gene>
    <name evidence="1" type="primary">mat</name>
    <name type="ordered locus">YN1551_0861</name>
</gene>
<dbReference type="EC" id="2.5.1.6" evidence="1"/>
<dbReference type="EMBL" id="CP001404">
    <property type="protein sequence ID" value="ACP47983.1"/>
    <property type="molecule type" value="Genomic_DNA"/>
</dbReference>
<dbReference type="RefSeq" id="WP_012717247.1">
    <property type="nucleotide sequence ID" value="NC_012623.1"/>
</dbReference>
<dbReference type="SMR" id="C3NF87"/>
<dbReference type="GeneID" id="7809543"/>
<dbReference type="KEGG" id="sin:YN1551_0861"/>
<dbReference type="HOGENOM" id="CLU_057642_0_0_2"/>
<dbReference type="UniPathway" id="UPA00315">
    <property type="reaction ID" value="UER00080"/>
</dbReference>
<dbReference type="Proteomes" id="UP000006818">
    <property type="component" value="Chromosome"/>
</dbReference>
<dbReference type="GO" id="GO:0005524">
    <property type="term" value="F:ATP binding"/>
    <property type="evidence" value="ECO:0007669"/>
    <property type="project" value="UniProtKB-UniRule"/>
</dbReference>
<dbReference type="GO" id="GO:0000287">
    <property type="term" value="F:magnesium ion binding"/>
    <property type="evidence" value="ECO:0007669"/>
    <property type="project" value="UniProtKB-UniRule"/>
</dbReference>
<dbReference type="GO" id="GO:0004478">
    <property type="term" value="F:methionine adenosyltransferase activity"/>
    <property type="evidence" value="ECO:0007669"/>
    <property type="project" value="UniProtKB-UniRule"/>
</dbReference>
<dbReference type="GO" id="GO:0006730">
    <property type="term" value="P:one-carbon metabolic process"/>
    <property type="evidence" value="ECO:0007669"/>
    <property type="project" value="UniProtKB-KW"/>
</dbReference>
<dbReference type="GO" id="GO:0006556">
    <property type="term" value="P:S-adenosylmethionine biosynthetic process"/>
    <property type="evidence" value="ECO:0007669"/>
    <property type="project" value="UniProtKB-UniRule"/>
</dbReference>
<dbReference type="Gene3D" id="3.30.300.10">
    <property type="match status" value="1"/>
</dbReference>
<dbReference type="Gene3D" id="3.30.300.280">
    <property type="entry name" value="S-adenosylmethionine synthetase, C-terminal domain"/>
    <property type="match status" value="2"/>
</dbReference>
<dbReference type="HAMAP" id="MF_00136">
    <property type="entry name" value="S_AdoMet_synth2"/>
    <property type="match status" value="1"/>
</dbReference>
<dbReference type="InterPro" id="IPR027790">
    <property type="entry name" value="AdoMet_synthase_2_family"/>
</dbReference>
<dbReference type="InterPro" id="IPR042544">
    <property type="entry name" value="AdoMet_synthase_3"/>
</dbReference>
<dbReference type="InterPro" id="IPR002795">
    <property type="entry name" value="S-AdoMet_synthetase_arc"/>
</dbReference>
<dbReference type="NCBIfam" id="NF003365">
    <property type="entry name" value="PRK04439.1-4"/>
    <property type="match status" value="1"/>
</dbReference>
<dbReference type="NCBIfam" id="NF003366">
    <property type="entry name" value="PRK04439.1-5"/>
    <property type="match status" value="1"/>
</dbReference>
<dbReference type="PANTHER" id="PTHR36697">
    <property type="entry name" value="S-ADENOSYLMETHIONINE SYNTHASE"/>
    <property type="match status" value="1"/>
</dbReference>
<dbReference type="PANTHER" id="PTHR36697:SF1">
    <property type="entry name" value="S-ADENOSYLMETHIONINE SYNTHASE"/>
    <property type="match status" value="1"/>
</dbReference>
<dbReference type="Pfam" id="PF01941">
    <property type="entry name" value="AdoMet_Synthase"/>
    <property type="match status" value="1"/>
</dbReference>
<feature type="chain" id="PRO_1000203218" description="S-adenosylmethionine synthase">
    <location>
        <begin position="1"/>
        <end position="404"/>
    </location>
</feature>
<feature type="binding site" evidence="1">
    <location>
        <begin position="139"/>
        <end position="144"/>
    </location>
    <ligand>
        <name>ATP</name>
        <dbReference type="ChEBI" id="CHEBI:30616"/>
    </ligand>
</feature>
<proteinExistence type="inferred from homology"/>
<organism>
    <name type="scientific">Saccharolobus islandicus (strain Y.N.15.51 / Yellowstone #2)</name>
    <name type="common">Sulfolobus islandicus</name>
    <dbReference type="NCBI Taxonomy" id="419942"/>
    <lineage>
        <taxon>Archaea</taxon>
        <taxon>Thermoproteota</taxon>
        <taxon>Thermoprotei</taxon>
        <taxon>Sulfolobales</taxon>
        <taxon>Sulfolobaceae</taxon>
        <taxon>Saccharolobus</taxon>
    </lineage>
</organism>
<reference key="1">
    <citation type="journal article" date="2009" name="Proc. Natl. Acad. Sci. U.S.A.">
        <title>Biogeography of the Sulfolobus islandicus pan-genome.</title>
        <authorList>
            <person name="Reno M.L."/>
            <person name="Held N.L."/>
            <person name="Fields C.J."/>
            <person name="Burke P.V."/>
            <person name="Whitaker R.J."/>
        </authorList>
    </citation>
    <scope>NUCLEOTIDE SEQUENCE [LARGE SCALE GENOMIC DNA]</scope>
    <source>
        <strain>Y.N.15.51 / Yellowstone #2</strain>
    </source>
</reference>
<evidence type="ECO:0000255" key="1">
    <source>
        <dbReference type="HAMAP-Rule" id="MF_00136"/>
    </source>
</evidence>
<accession>C3NF87</accession>
<name>METK_SACI1</name>
<keyword id="KW-0067">ATP-binding</keyword>
<keyword id="KW-0460">Magnesium</keyword>
<keyword id="KW-0547">Nucleotide-binding</keyword>
<keyword id="KW-0554">One-carbon metabolism</keyword>
<keyword id="KW-0808">Transferase</keyword>